<reference key="1">
    <citation type="journal article" date="2004" name="Nature">
        <title>The DNA sequence and biology of human chromosome 19.</title>
        <authorList>
            <person name="Grimwood J."/>
            <person name="Gordon L.A."/>
            <person name="Olsen A.S."/>
            <person name="Terry A."/>
            <person name="Schmutz J."/>
            <person name="Lamerdin J.E."/>
            <person name="Hellsten U."/>
            <person name="Goodstein D."/>
            <person name="Couronne O."/>
            <person name="Tran-Gyamfi M."/>
            <person name="Aerts A."/>
            <person name="Altherr M."/>
            <person name="Ashworth L."/>
            <person name="Bajorek E."/>
            <person name="Black S."/>
            <person name="Branscomb E."/>
            <person name="Caenepeel S."/>
            <person name="Carrano A.V."/>
            <person name="Caoile C."/>
            <person name="Chan Y.M."/>
            <person name="Christensen M."/>
            <person name="Cleland C.A."/>
            <person name="Copeland A."/>
            <person name="Dalin E."/>
            <person name="Dehal P."/>
            <person name="Denys M."/>
            <person name="Detter J.C."/>
            <person name="Escobar J."/>
            <person name="Flowers D."/>
            <person name="Fotopulos D."/>
            <person name="Garcia C."/>
            <person name="Georgescu A.M."/>
            <person name="Glavina T."/>
            <person name="Gomez M."/>
            <person name="Gonzales E."/>
            <person name="Groza M."/>
            <person name="Hammon N."/>
            <person name="Hawkins T."/>
            <person name="Haydu L."/>
            <person name="Ho I."/>
            <person name="Huang W."/>
            <person name="Israni S."/>
            <person name="Jett J."/>
            <person name="Kadner K."/>
            <person name="Kimball H."/>
            <person name="Kobayashi A."/>
            <person name="Larionov V."/>
            <person name="Leem S.-H."/>
            <person name="Lopez F."/>
            <person name="Lou Y."/>
            <person name="Lowry S."/>
            <person name="Malfatti S."/>
            <person name="Martinez D."/>
            <person name="McCready P.M."/>
            <person name="Medina C."/>
            <person name="Morgan J."/>
            <person name="Nelson K."/>
            <person name="Nolan M."/>
            <person name="Ovcharenko I."/>
            <person name="Pitluck S."/>
            <person name="Pollard M."/>
            <person name="Popkie A.P."/>
            <person name="Predki P."/>
            <person name="Quan G."/>
            <person name="Ramirez L."/>
            <person name="Rash S."/>
            <person name="Retterer J."/>
            <person name="Rodriguez A."/>
            <person name="Rogers S."/>
            <person name="Salamov A."/>
            <person name="Salazar A."/>
            <person name="She X."/>
            <person name="Smith D."/>
            <person name="Slezak T."/>
            <person name="Solovyev V."/>
            <person name="Thayer N."/>
            <person name="Tice H."/>
            <person name="Tsai M."/>
            <person name="Ustaszewska A."/>
            <person name="Vo N."/>
            <person name="Wagner M."/>
            <person name="Wheeler J."/>
            <person name="Wu K."/>
            <person name="Xie G."/>
            <person name="Yang J."/>
            <person name="Dubchak I."/>
            <person name="Furey T.S."/>
            <person name="DeJong P."/>
            <person name="Dickson M."/>
            <person name="Gordon D."/>
            <person name="Eichler E.E."/>
            <person name="Pennacchio L.A."/>
            <person name="Richardson P."/>
            <person name="Stubbs L."/>
            <person name="Rokhsar D.S."/>
            <person name="Myers R.M."/>
            <person name="Rubin E.M."/>
            <person name="Lucas S.M."/>
        </authorList>
    </citation>
    <scope>NUCLEOTIDE SEQUENCE [LARGE SCALE GENOMIC DNA]</scope>
    <source>
        <tissue>Sperm</tissue>
    </source>
</reference>
<reference key="2">
    <citation type="journal article" date="2002" name="Genomics">
        <title>DEFOG: a practical scheme for deciphering families of genes.</title>
        <authorList>
            <person name="Fuchs T."/>
            <person name="Malecova B."/>
            <person name="Linhart C."/>
            <person name="Sharan R."/>
            <person name="Khen M."/>
            <person name="Herwig R."/>
            <person name="Shmulevich D."/>
            <person name="Elkon R."/>
            <person name="Steinfath M."/>
            <person name="O'Brien J.K."/>
            <person name="Radelof U."/>
            <person name="Lehrach H."/>
            <person name="Lancet D."/>
            <person name="Shamir R."/>
        </authorList>
    </citation>
    <scope>NUCLEOTIDE SEQUENCE [GENOMIC DNA] OF 68-283</scope>
</reference>
<reference key="3">
    <citation type="journal article" date="2004" name="Proc. Natl. Acad. Sci. U.S.A.">
        <title>The human olfactory receptor gene family.</title>
        <authorList>
            <person name="Malnic B."/>
            <person name="Godfrey P.A."/>
            <person name="Buck L.B."/>
        </authorList>
    </citation>
    <scope>IDENTIFICATION</scope>
</reference>
<reference key="4">
    <citation type="journal article" date="2004" name="Proc. Natl. Acad. Sci. U.S.A.">
        <authorList>
            <person name="Malnic B."/>
            <person name="Godfrey P.A."/>
            <person name="Buck L.B."/>
        </authorList>
    </citation>
    <scope>ERRATUM OF PUBMED:14983052</scope>
</reference>
<gene>
    <name type="primary">OR7A10</name>
</gene>
<name>OR7AA_HUMAN</name>
<dbReference type="EMBL" id="AC005255">
    <property type="protein sequence ID" value="AAC25627.1"/>
    <property type="molecule type" value="Genomic_DNA"/>
</dbReference>
<dbReference type="EMBL" id="AF399542">
    <property type="protein sequence ID" value="AAK95027.1"/>
    <property type="molecule type" value="Genomic_DNA"/>
</dbReference>
<dbReference type="EMBL" id="BK004222">
    <property type="protein sequence ID" value="DAA04620.1"/>
    <property type="molecule type" value="Genomic_DNA"/>
</dbReference>
<dbReference type="CCDS" id="CCDS32936.1"/>
<dbReference type="RefSeq" id="NP_001005190.1">
    <property type="nucleotide sequence ID" value="NM_001005190.2"/>
</dbReference>
<dbReference type="SMR" id="O76100"/>
<dbReference type="BioGRID" id="133724">
    <property type="interactions" value="2"/>
</dbReference>
<dbReference type="FunCoup" id="O76100">
    <property type="interactions" value="462"/>
</dbReference>
<dbReference type="IntAct" id="O76100">
    <property type="interactions" value="1"/>
</dbReference>
<dbReference type="STRING" id="9606.ENSP00000493055"/>
<dbReference type="GlyCosmos" id="O76100">
    <property type="glycosylation" value="1 site, No reported glycans"/>
</dbReference>
<dbReference type="GlyGen" id="O76100">
    <property type="glycosylation" value="1 site"/>
</dbReference>
<dbReference type="BioMuta" id="OR7A10"/>
<dbReference type="MassIVE" id="O76100"/>
<dbReference type="PaxDb" id="9606-ENSP00000248058"/>
<dbReference type="TopDownProteomics" id="O76100"/>
<dbReference type="Antibodypedia" id="59282">
    <property type="antibodies" value="43 antibodies from 14 providers"/>
</dbReference>
<dbReference type="DNASU" id="390892"/>
<dbReference type="Ensembl" id="ENST00000641129.1">
    <property type="protein sequence ID" value="ENSP00000493055.1"/>
    <property type="gene ID" value="ENSG00000127515.3"/>
</dbReference>
<dbReference type="GeneID" id="390892"/>
<dbReference type="KEGG" id="hsa:390892"/>
<dbReference type="MANE-Select" id="ENST00000641129.1">
    <property type="protein sequence ID" value="ENSP00000493055.1"/>
    <property type="RefSeq nucleotide sequence ID" value="NM_001005190.2"/>
    <property type="RefSeq protein sequence ID" value="NP_001005190.1"/>
</dbReference>
<dbReference type="UCSC" id="uc002mzx.1">
    <property type="organism name" value="human"/>
</dbReference>
<dbReference type="AGR" id="HGNC:8356"/>
<dbReference type="CTD" id="390892"/>
<dbReference type="GeneCards" id="OR7A10"/>
<dbReference type="HGNC" id="HGNC:8356">
    <property type="gene designation" value="OR7A10"/>
</dbReference>
<dbReference type="HPA" id="ENSG00000127515">
    <property type="expression patterns" value="Not detected"/>
</dbReference>
<dbReference type="neXtProt" id="NX_O76100"/>
<dbReference type="PharmGKB" id="PA32611"/>
<dbReference type="VEuPathDB" id="HostDB:ENSG00000127515"/>
<dbReference type="eggNOG" id="ENOG502RTYS">
    <property type="taxonomic scope" value="Eukaryota"/>
</dbReference>
<dbReference type="GeneTree" id="ENSGT00940000153523"/>
<dbReference type="HOGENOM" id="CLU_012526_1_0_1"/>
<dbReference type="InParanoid" id="O76100"/>
<dbReference type="OMA" id="PLHYRAM"/>
<dbReference type="OrthoDB" id="9444602at2759"/>
<dbReference type="PAN-GO" id="O76100">
    <property type="GO annotations" value="3 GO annotations based on evolutionary models"/>
</dbReference>
<dbReference type="PhylomeDB" id="O76100"/>
<dbReference type="TreeFam" id="TF337210"/>
<dbReference type="PathwayCommons" id="O76100"/>
<dbReference type="Reactome" id="R-HSA-9752946">
    <property type="pathway name" value="Expression and translocation of olfactory receptors"/>
</dbReference>
<dbReference type="SignaLink" id="O76100"/>
<dbReference type="BioGRID-ORCS" id="390892">
    <property type="hits" value="205 hits in 683 CRISPR screens"/>
</dbReference>
<dbReference type="ChiTaRS" id="OR7A10">
    <property type="organism name" value="human"/>
</dbReference>
<dbReference type="GeneWiki" id="OR7A10"/>
<dbReference type="GenomeRNAi" id="390892"/>
<dbReference type="Pharos" id="O76100">
    <property type="development level" value="Tdark"/>
</dbReference>
<dbReference type="PRO" id="PR:O76100"/>
<dbReference type="Proteomes" id="UP000005640">
    <property type="component" value="Chromosome 19"/>
</dbReference>
<dbReference type="RNAct" id="O76100">
    <property type="molecule type" value="protein"/>
</dbReference>
<dbReference type="ExpressionAtlas" id="O76100">
    <property type="expression patterns" value="baseline and differential"/>
</dbReference>
<dbReference type="GO" id="GO:0005886">
    <property type="term" value="C:plasma membrane"/>
    <property type="evidence" value="ECO:0000318"/>
    <property type="project" value="GO_Central"/>
</dbReference>
<dbReference type="GO" id="GO:0004930">
    <property type="term" value="F:G protein-coupled receptor activity"/>
    <property type="evidence" value="ECO:0007669"/>
    <property type="project" value="UniProtKB-KW"/>
</dbReference>
<dbReference type="GO" id="GO:0004984">
    <property type="term" value="F:olfactory receptor activity"/>
    <property type="evidence" value="ECO:0000318"/>
    <property type="project" value="GO_Central"/>
</dbReference>
<dbReference type="GO" id="GO:0007165">
    <property type="term" value="P:signal transduction"/>
    <property type="evidence" value="ECO:0000318"/>
    <property type="project" value="GO_Central"/>
</dbReference>
<dbReference type="CDD" id="cd15234">
    <property type="entry name" value="7tmA_OR7-like"/>
    <property type="match status" value="1"/>
</dbReference>
<dbReference type="FunFam" id="1.20.1070.10:FF:000009">
    <property type="entry name" value="Olfactory receptor"/>
    <property type="match status" value="1"/>
</dbReference>
<dbReference type="Gene3D" id="1.20.1070.10">
    <property type="entry name" value="Rhodopsin 7-helix transmembrane proteins"/>
    <property type="match status" value="1"/>
</dbReference>
<dbReference type="InterPro" id="IPR000276">
    <property type="entry name" value="GPCR_Rhodpsn"/>
</dbReference>
<dbReference type="InterPro" id="IPR017452">
    <property type="entry name" value="GPCR_Rhodpsn_7TM"/>
</dbReference>
<dbReference type="InterPro" id="IPR000725">
    <property type="entry name" value="Olfact_rcpt"/>
</dbReference>
<dbReference type="PANTHER" id="PTHR48001">
    <property type="entry name" value="OLFACTORY RECEPTOR"/>
    <property type="match status" value="1"/>
</dbReference>
<dbReference type="Pfam" id="PF13853">
    <property type="entry name" value="7tm_4"/>
    <property type="match status" value="1"/>
</dbReference>
<dbReference type="PRINTS" id="PR00237">
    <property type="entry name" value="GPCRRHODOPSN"/>
</dbReference>
<dbReference type="PRINTS" id="PR00245">
    <property type="entry name" value="OLFACTORYR"/>
</dbReference>
<dbReference type="SUPFAM" id="SSF81321">
    <property type="entry name" value="Family A G protein-coupled receptor-like"/>
    <property type="match status" value="1"/>
</dbReference>
<dbReference type="PROSITE" id="PS00237">
    <property type="entry name" value="G_PROTEIN_RECEP_F1_1"/>
    <property type="match status" value="1"/>
</dbReference>
<dbReference type="PROSITE" id="PS50262">
    <property type="entry name" value="G_PROTEIN_RECEP_F1_2"/>
    <property type="match status" value="1"/>
</dbReference>
<keyword id="KW-1003">Cell membrane</keyword>
<keyword id="KW-1015">Disulfide bond</keyword>
<keyword id="KW-0297">G-protein coupled receptor</keyword>
<keyword id="KW-0325">Glycoprotein</keyword>
<keyword id="KW-0472">Membrane</keyword>
<keyword id="KW-0552">Olfaction</keyword>
<keyword id="KW-0675">Receptor</keyword>
<keyword id="KW-1185">Reference proteome</keyword>
<keyword id="KW-0716">Sensory transduction</keyword>
<keyword id="KW-0807">Transducer</keyword>
<keyword id="KW-0812">Transmembrane</keyword>
<keyword id="KW-1133">Transmembrane helix</keyword>
<sequence>MKSWNNTIILEFLLLGISEEPELQAFLFGLFLSMYLVTVLGNLLIILATISDSHLHTPMYFFLSNLSFVDICFVSTTVPKMLVNIQTHNKVITYAGCITQMCFFLLFVGLDNFLLTVMAYDRFVAICHPLHYMVIMNPQLCGLLVLASWIMSVLNSMLQSLMVLPLPFCTHMEIPHFFCEINQVVHLACSDTFLNDIVMYFAVALLGGGPLTGILYSYSKIVSSIRAISSAQGKYKAFSTCASHLSVVSLFYGTCLGVYLSSAATHNSHTGAAASVMYTVVTPMLNPFIYSLRNKHIKGAMKTFFRGKQ</sequence>
<comment type="function">
    <text evidence="3">Odorant receptor.</text>
</comment>
<comment type="subcellular location">
    <subcellularLocation>
        <location>Cell membrane</location>
        <topology>Multi-pass membrane protein</topology>
    </subcellularLocation>
</comment>
<comment type="similarity">
    <text evidence="2">Belongs to the G-protein coupled receptor 1 family.</text>
</comment>
<comment type="online information" name="Human Olfactory Receptor Data Exploratorium (HORDE)">
    <link uri="http://genome.weizmann.ac.il/horde/card/index/symbol:OR7A10"/>
</comment>
<evidence type="ECO:0000255" key="1"/>
<evidence type="ECO:0000255" key="2">
    <source>
        <dbReference type="PROSITE-ProRule" id="PRU00521"/>
    </source>
</evidence>
<evidence type="ECO:0000305" key="3"/>
<accession>O76100</accession>
<accession>Q6IFP0</accession>
<accession>Q96R97</accession>
<organism>
    <name type="scientific">Homo sapiens</name>
    <name type="common">Human</name>
    <dbReference type="NCBI Taxonomy" id="9606"/>
    <lineage>
        <taxon>Eukaryota</taxon>
        <taxon>Metazoa</taxon>
        <taxon>Chordata</taxon>
        <taxon>Craniata</taxon>
        <taxon>Vertebrata</taxon>
        <taxon>Euteleostomi</taxon>
        <taxon>Mammalia</taxon>
        <taxon>Eutheria</taxon>
        <taxon>Euarchontoglires</taxon>
        <taxon>Primates</taxon>
        <taxon>Haplorrhini</taxon>
        <taxon>Catarrhini</taxon>
        <taxon>Hominidae</taxon>
        <taxon>Homo</taxon>
    </lineage>
</organism>
<protein>
    <recommendedName>
        <fullName>Olfactory receptor 7A10</fullName>
    </recommendedName>
    <alternativeName>
        <fullName>OST027</fullName>
    </alternativeName>
    <alternativeName>
        <fullName>Olfactory receptor OR19-18</fullName>
    </alternativeName>
</protein>
<feature type="chain" id="PRO_0000150644" description="Olfactory receptor 7A10">
    <location>
        <begin position="1"/>
        <end position="309"/>
    </location>
</feature>
<feature type="topological domain" description="Extracellular" evidence="1">
    <location>
        <begin position="1"/>
        <end position="25"/>
    </location>
</feature>
<feature type="transmembrane region" description="Helical; Name=1" evidence="1">
    <location>
        <begin position="26"/>
        <end position="46"/>
    </location>
</feature>
<feature type="topological domain" description="Cytoplasmic" evidence="1">
    <location>
        <begin position="47"/>
        <end position="54"/>
    </location>
</feature>
<feature type="transmembrane region" description="Helical; Name=2" evidence="1">
    <location>
        <begin position="55"/>
        <end position="75"/>
    </location>
</feature>
<feature type="topological domain" description="Extracellular" evidence="1">
    <location>
        <begin position="76"/>
        <end position="99"/>
    </location>
</feature>
<feature type="transmembrane region" description="Helical; Name=3" evidence="1">
    <location>
        <begin position="100"/>
        <end position="120"/>
    </location>
</feature>
<feature type="topological domain" description="Cytoplasmic" evidence="1">
    <location>
        <begin position="121"/>
        <end position="139"/>
    </location>
</feature>
<feature type="transmembrane region" description="Helical; Name=4" evidence="1">
    <location>
        <begin position="140"/>
        <end position="160"/>
    </location>
</feature>
<feature type="topological domain" description="Extracellular" evidence="1">
    <location>
        <begin position="161"/>
        <end position="197"/>
    </location>
</feature>
<feature type="transmembrane region" description="Helical; Name=5" evidence="1">
    <location>
        <begin position="198"/>
        <end position="217"/>
    </location>
</feature>
<feature type="topological domain" description="Cytoplasmic" evidence="1">
    <location>
        <begin position="218"/>
        <end position="237"/>
    </location>
</feature>
<feature type="transmembrane region" description="Helical; Name=6" evidence="1">
    <location>
        <begin position="238"/>
        <end position="258"/>
    </location>
</feature>
<feature type="topological domain" description="Extracellular" evidence="1">
    <location>
        <begin position="259"/>
        <end position="271"/>
    </location>
</feature>
<feature type="transmembrane region" description="Helical; Name=7" evidence="1">
    <location>
        <begin position="272"/>
        <end position="292"/>
    </location>
</feature>
<feature type="topological domain" description="Cytoplasmic" evidence="1">
    <location>
        <begin position="293"/>
        <end position="309"/>
    </location>
</feature>
<feature type="glycosylation site" description="N-linked (GlcNAc...) asparagine" evidence="1">
    <location>
        <position position="5"/>
    </location>
</feature>
<feature type="disulfide bond" evidence="2">
    <location>
        <begin position="97"/>
        <end position="189"/>
    </location>
</feature>
<feature type="sequence variant" id="VAR_053225" description="In dbSNP:rs12972670.">
    <original>M</original>
    <variation>T</variation>
    <location>
        <position position="151"/>
    </location>
</feature>
<feature type="sequence variant" id="VAR_034254" description="In dbSNP:rs9305052.">
    <original>Q</original>
    <variation>E</variation>
    <location>
        <position position="183"/>
    </location>
</feature>
<feature type="sequence variant" id="VAR_053226" description="In dbSNP:rs11880955.">
    <original>I</original>
    <variation>L</variation>
    <location>
        <position position="225"/>
    </location>
</feature>
<feature type="sequence variant" id="VAR_053227" description="In dbSNP:rs10221530.">
    <original>A</original>
    <variation>T</variation>
    <location>
        <position position="273"/>
    </location>
</feature>
<feature type="sequence conflict" description="In Ref. 2; AAK95027." evidence="3" ref="2">
    <original>D</original>
    <variation>G</variation>
    <location>
        <position position="70"/>
    </location>
</feature>
<proteinExistence type="inferred from homology"/>